<evidence type="ECO:0000255" key="1">
    <source>
        <dbReference type="HAMAP-Rule" id="MF_00332"/>
    </source>
</evidence>
<evidence type="ECO:0000256" key="2">
    <source>
        <dbReference type="SAM" id="MobiDB-lite"/>
    </source>
</evidence>
<sequence>MGKIIGIDLGTTNSCVAIMEGNTPKVIENAEGARTTPSIIAYMEDGEILVGAPAKRQAVTNPKNTLYAVKRLIGRKFEEKEVQKDIGLMPYSIVKADNGDAWVEVRGQKLAPPQISAETLRKMKKTAEDYLGEEVTEAVITVPAYFNDSQRQATKDAGRIAGLDVKRIINEPTAAALAFGLDKNEKGDRKIAVYDLGGGTFDISIIEIADVDGEKQFEVLSTNGDTFLGGEDFDQRIIDYIIGEFKKEQGVDLSKDVLALQRLKEAAEKAKIELSSTQQTEINLPYITADASGPKHLNLKITRAKLEALVEDLIARTIDPCRTAIKDAGVKVSDIHDVILVGGMTRMPKVQEKVKEFFGKEARKDVNPDEAVAVGAAIQGQVLGGDRTDVLLLDVTPLSLGIETLGGVMTKMIGKNTTIPTKFSQTFSTADDNQPAVTIKVYQGEREMASGNKMLGEFNLEGIPPAPRGTPQIEVSFDIDANGILHVGAKDKATGKENKITIKASSGLSEAEIERMVKDAEANAEEDKKLRELVDSRNQGEALVHSTKKALGEYGDKLEAGEKDKIEAAIKELEETLKGTDKAAIDAKTEALATASQKLGEKVYADMQAKGEAGGAEQAAGAQAGAQAGQGAPHDDNVVDAEFKEVNDKK</sequence>
<keyword id="KW-0067">ATP-binding</keyword>
<keyword id="KW-0143">Chaperone</keyword>
<keyword id="KW-0547">Nucleotide-binding</keyword>
<keyword id="KW-0597">Phosphoprotein</keyword>
<keyword id="KW-0346">Stress response</keyword>
<dbReference type="EMBL" id="CP001068">
    <property type="protein sequence ID" value="ACD27993.1"/>
    <property type="molecule type" value="Genomic_DNA"/>
</dbReference>
<dbReference type="SMR" id="B2UBP3"/>
<dbReference type="STRING" id="402626.Rpic_2870"/>
<dbReference type="KEGG" id="rpi:Rpic_2870"/>
<dbReference type="PATRIC" id="fig|402626.5.peg.4007"/>
<dbReference type="eggNOG" id="COG0443">
    <property type="taxonomic scope" value="Bacteria"/>
</dbReference>
<dbReference type="HOGENOM" id="CLU_005965_2_1_4"/>
<dbReference type="GO" id="GO:0005524">
    <property type="term" value="F:ATP binding"/>
    <property type="evidence" value="ECO:0007669"/>
    <property type="project" value="UniProtKB-UniRule"/>
</dbReference>
<dbReference type="GO" id="GO:0140662">
    <property type="term" value="F:ATP-dependent protein folding chaperone"/>
    <property type="evidence" value="ECO:0007669"/>
    <property type="project" value="InterPro"/>
</dbReference>
<dbReference type="GO" id="GO:0051082">
    <property type="term" value="F:unfolded protein binding"/>
    <property type="evidence" value="ECO:0007669"/>
    <property type="project" value="InterPro"/>
</dbReference>
<dbReference type="CDD" id="cd10234">
    <property type="entry name" value="ASKHA_NBD_HSP70_DnaK-like"/>
    <property type="match status" value="1"/>
</dbReference>
<dbReference type="FunFam" id="2.60.34.10:FF:000014">
    <property type="entry name" value="Chaperone protein DnaK HSP70"/>
    <property type="match status" value="1"/>
</dbReference>
<dbReference type="FunFam" id="3.30.30.30:FF:000003">
    <property type="entry name" value="Heat shock protein 9"/>
    <property type="match status" value="1"/>
</dbReference>
<dbReference type="FunFam" id="1.20.1270.10:FF:000001">
    <property type="entry name" value="Molecular chaperone DnaK"/>
    <property type="match status" value="1"/>
</dbReference>
<dbReference type="FunFam" id="3.30.420.40:FF:000004">
    <property type="entry name" value="Molecular chaperone DnaK"/>
    <property type="match status" value="1"/>
</dbReference>
<dbReference type="FunFam" id="3.90.640.10:FF:000003">
    <property type="entry name" value="Molecular chaperone DnaK"/>
    <property type="match status" value="1"/>
</dbReference>
<dbReference type="Gene3D" id="1.20.1270.10">
    <property type="match status" value="1"/>
</dbReference>
<dbReference type="Gene3D" id="3.30.420.40">
    <property type="match status" value="2"/>
</dbReference>
<dbReference type="Gene3D" id="3.90.640.10">
    <property type="entry name" value="Actin, Chain A, domain 4"/>
    <property type="match status" value="1"/>
</dbReference>
<dbReference type="Gene3D" id="2.60.34.10">
    <property type="entry name" value="Substrate Binding Domain Of DNAk, Chain A, domain 1"/>
    <property type="match status" value="1"/>
</dbReference>
<dbReference type="HAMAP" id="MF_00332">
    <property type="entry name" value="DnaK"/>
    <property type="match status" value="1"/>
</dbReference>
<dbReference type="InterPro" id="IPR043129">
    <property type="entry name" value="ATPase_NBD"/>
</dbReference>
<dbReference type="InterPro" id="IPR012725">
    <property type="entry name" value="Chaperone_DnaK"/>
</dbReference>
<dbReference type="InterPro" id="IPR018181">
    <property type="entry name" value="Heat_shock_70_CS"/>
</dbReference>
<dbReference type="InterPro" id="IPR029048">
    <property type="entry name" value="HSP70_C_sf"/>
</dbReference>
<dbReference type="InterPro" id="IPR029047">
    <property type="entry name" value="HSP70_peptide-bd_sf"/>
</dbReference>
<dbReference type="InterPro" id="IPR013126">
    <property type="entry name" value="Hsp_70_fam"/>
</dbReference>
<dbReference type="NCBIfam" id="NF001413">
    <property type="entry name" value="PRK00290.1"/>
    <property type="match status" value="1"/>
</dbReference>
<dbReference type="NCBIfam" id="NF003520">
    <property type="entry name" value="PRK05183.1"/>
    <property type="match status" value="1"/>
</dbReference>
<dbReference type="NCBIfam" id="TIGR02350">
    <property type="entry name" value="prok_dnaK"/>
    <property type="match status" value="1"/>
</dbReference>
<dbReference type="PANTHER" id="PTHR19375">
    <property type="entry name" value="HEAT SHOCK PROTEIN 70KDA"/>
    <property type="match status" value="1"/>
</dbReference>
<dbReference type="Pfam" id="PF00012">
    <property type="entry name" value="HSP70"/>
    <property type="match status" value="1"/>
</dbReference>
<dbReference type="PRINTS" id="PR00301">
    <property type="entry name" value="HEATSHOCK70"/>
</dbReference>
<dbReference type="SUPFAM" id="SSF53067">
    <property type="entry name" value="Actin-like ATPase domain"/>
    <property type="match status" value="2"/>
</dbReference>
<dbReference type="SUPFAM" id="SSF100934">
    <property type="entry name" value="Heat shock protein 70kD (HSP70), C-terminal subdomain"/>
    <property type="match status" value="1"/>
</dbReference>
<dbReference type="SUPFAM" id="SSF100920">
    <property type="entry name" value="Heat shock protein 70kD (HSP70), peptide-binding domain"/>
    <property type="match status" value="1"/>
</dbReference>
<dbReference type="PROSITE" id="PS00297">
    <property type="entry name" value="HSP70_1"/>
    <property type="match status" value="1"/>
</dbReference>
<dbReference type="PROSITE" id="PS00329">
    <property type="entry name" value="HSP70_2"/>
    <property type="match status" value="1"/>
</dbReference>
<dbReference type="PROSITE" id="PS01036">
    <property type="entry name" value="HSP70_3"/>
    <property type="match status" value="1"/>
</dbReference>
<proteinExistence type="inferred from homology"/>
<name>DNAK_RALPJ</name>
<organism>
    <name type="scientific">Ralstonia pickettii (strain 12J)</name>
    <dbReference type="NCBI Taxonomy" id="402626"/>
    <lineage>
        <taxon>Bacteria</taxon>
        <taxon>Pseudomonadati</taxon>
        <taxon>Pseudomonadota</taxon>
        <taxon>Betaproteobacteria</taxon>
        <taxon>Burkholderiales</taxon>
        <taxon>Burkholderiaceae</taxon>
        <taxon>Ralstonia</taxon>
    </lineage>
</organism>
<feature type="chain" id="PRO_1000119744" description="Chaperone protein DnaK">
    <location>
        <begin position="1"/>
        <end position="650"/>
    </location>
</feature>
<feature type="region of interest" description="Disordered" evidence="2">
    <location>
        <begin position="609"/>
        <end position="638"/>
    </location>
</feature>
<feature type="compositionally biased region" description="Low complexity" evidence="2">
    <location>
        <begin position="609"/>
        <end position="632"/>
    </location>
</feature>
<feature type="modified residue" description="Phosphothreonine; by autocatalysis" evidence="1">
    <location>
        <position position="200"/>
    </location>
</feature>
<comment type="function">
    <text evidence="1">Acts as a chaperone.</text>
</comment>
<comment type="induction">
    <text evidence="1">By stress conditions e.g. heat shock.</text>
</comment>
<comment type="similarity">
    <text evidence="1">Belongs to the heat shock protein 70 family.</text>
</comment>
<accession>B2UBP3</accession>
<protein>
    <recommendedName>
        <fullName evidence="1">Chaperone protein DnaK</fullName>
    </recommendedName>
    <alternativeName>
        <fullName evidence="1">HSP70</fullName>
    </alternativeName>
    <alternativeName>
        <fullName evidence="1">Heat shock 70 kDa protein</fullName>
    </alternativeName>
    <alternativeName>
        <fullName evidence="1">Heat shock protein 70</fullName>
    </alternativeName>
</protein>
<gene>
    <name evidence="1" type="primary">dnaK</name>
    <name type="ordered locus">Rpic_2870</name>
</gene>
<reference key="1">
    <citation type="submission" date="2008-05" db="EMBL/GenBank/DDBJ databases">
        <title>Complete sequence of chromosome 1 of Ralstonia pickettii 12J.</title>
        <authorList>
            <person name="Lucas S."/>
            <person name="Copeland A."/>
            <person name="Lapidus A."/>
            <person name="Glavina del Rio T."/>
            <person name="Dalin E."/>
            <person name="Tice H."/>
            <person name="Bruce D."/>
            <person name="Goodwin L."/>
            <person name="Pitluck S."/>
            <person name="Meincke L."/>
            <person name="Brettin T."/>
            <person name="Detter J.C."/>
            <person name="Han C."/>
            <person name="Kuske C.R."/>
            <person name="Schmutz J."/>
            <person name="Larimer F."/>
            <person name="Land M."/>
            <person name="Hauser L."/>
            <person name="Kyrpides N."/>
            <person name="Mikhailova N."/>
            <person name="Marsh T."/>
            <person name="Richardson P."/>
        </authorList>
    </citation>
    <scope>NUCLEOTIDE SEQUENCE [LARGE SCALE GENOMIC DNA]</scope>
    <source>
        <strain>12J</strain>
    </source>
</reference>